<organism>
    <name type="scientific">Cereibacter sphaeroides (strain ATCC 17023 / DSM 158 / JCM 6121 / CCUG 31486 / LMG 2827 / NBRC 12203 / NCIMB 8253 / ATH 2.4.1.)</name>
    <name type="common">Rhodobacter sphaeroides</name>
    <dbReference type="NCBI Taxonomy" id="272943"/>
    <lineage>
        <taxon>Bacteria</taxon>
        <taxon>Pseudomonadati</taxon>
        <taxon>Pseudomonadota</taxon>
        <taxon>Alphaproteobacteria</taxon>
        <taxon>Rhodobacterales</taxon>
        <taxon>Paracoccaceae</taxon>
        <taxon>Cereibacter</taxon>
    </lineage>
</organism>
<sequence length="425" mass="45523">MSTIIDIHAREILDSRGNPTVEVDVTLESGAFGRAAVPSGASTGAHEAVEKRDGDKSRYMGKGVLEAVAAVNGEIAEMLVGFDATEQVGIDRTMIEMDGTPNKGRLGANAILGVSLAVAKAAAEFTNQPLFRYVGGSSARVLPVPMMNIINGGEHADNPIDIQEFMIMPVAAQNVREAIRMGSEVFHTLKKELAAGGFNTGIGDEGGFAPNISSTREALDYILRSIEKAGYKPGEDIYLALDCASTEYFKGGKYEMKGEGKSLTSAENVDYLAALCADYPIISIEDGCAEDDWEGWKLLTDKLGAKVQLVGDDLFVTNPKRLEQGIKAGVANSMLVKVNQIGSLTETLMAVDMAHRARYTNVMSHRSGETEDATIADLAVATNCGQIKTGSLSRSDRLAKYNQLIRIEEMLGEVAEYAGRSILKV</sequence>
<keyword id="KW-0963">Cytoplasm</keyword>
<keyword id="KW-0324">Glycolysis</keyword>
<keyword id="KW-0456">Lyase</keyword>
<keyword id="KW-0460">Magnesium</keyword>
<keyword id="KW-0479">Metal-binding</keyword>
<keyword id="KW-1185">Reference proteome</keyword>
<keyword id="KW-0964">Secreted</keyword>
<reference key="1">
    <citation type="submission" date="2005-09" db="EMBL/GenBank/DDBJ databases">
        <title>Complete sequence of chromosome 1 of Rhodobacter sphaeroides 2.4.1.</title>
        <authorList>
            <person name="Copeland A."/>
            <person name="Lucas S."/>
            <person name="Lapidus A."/>
            <person name="Barry K."/>
            <person name="Detter J.C."/>
            <person name="Glavina T."/>
            <person name="Hammon N."/>
            <person name="Israni S."/>
            <person name="Pitluck S."/>
            <person name="Richardson P."/>
            <person name="Mackenzie C."/>
            <person name="Choudhary M."/>
            <person name="Larimer F."/>
            <person name="Hauser L.J."/>
            <person name="Land M."/>
            <person name="Donohue T.J."/>
            <person name="Kaplan S."/>
        </authorList>
    </citation>
    <scope>NUCLEOTIDE SEQUENCE [LARGE SCALE GENOMIC DNA]</scope>
    <source>
        <strain>ATCC 17023 / DSM 158 / JCM 6121 / CCUG 31486 / LMG 2827 / NBRC 12203 / NCIMB 8253 / ATH 2.4.1.</strain>
    </source>
</reference>
<proteinExistence type="inferred from homology"/>
<evidence type="ECO:0000255" key="1">
    <source>
        <dbReference type="HAMAP-Rule" id="MF_00318"/>
    </source>
</evidence>
<protein>
    <recommendedName>
        <fullName evidence="1">Enolase</fullName>
        <ecNumber evidence="1">4.2.1.11</ecNumber>
    </recommendedName>
    <alternativeName>
        <fullName evidence="1">2-phospho-D-glycerate hydro-lyase</fullName>
    </alternativeName>
    <alternativeName>
        <fullName evidence="1">2-phosphoglycerate dehydratase</fullName>
    </alternativeName>
</protein>
<dbReference type="EC" id="4.2.1.11" evidence="1"/>
<dbReference type="EMBL" id="CP000143">
    <property type="protein sequence ID" value="ABA78655.1"/>
    <property type="molecule type" value="Genomic_DNA"/>
</dbReference>
<dbReference type="RefSeq" id="WP_002719649.1">
    <property type="nucleotide sequence ID" value="NZ_CP030271.1"/>
</dbReference>
<dbReference type="RefSeq" id="YP_352556.1">
    <property type="nucleotide sequence ID" value="NC_007493.2"/>
</dbReference>
<dbReference type="SMR" id="Q3J3H9"/>
<dbReference type="STRING" id="272943.RSP_2491"/>
<dbReference type="EnsemblBacteria" id="ABA78655">
    <property type="protein sequence ID" value="ABA78655"/>
    <property type="gene ID" value="RSP_2491"/>
</dbReference>
<dbReference type="GeneID" id="67446253"/>
<dbReference type="KEGG" id="rsp:RSP_2491"/>
<dbReference type="PATRIC" id="fig|272943.9.peg.1413"/>
<dbReference type="eggNOG" id="COG0148">
    <property type="taxonomic scope" value="Bacteria"/>
</dbReference>
<dbReference type="OrthoDB" id="9804716at2"/>
<dbReference type="PhylomeDB" id="Q3J3H9"/>
<dbReference type="UniPathway" id="UPA00109">
    <property type="reaction ID" value="UER00187"/>
</dbReference>
<dbReference type="Proteomes" id="UP000002703">
    <property type="component" value="Chromosome 1"/>
</dbReference>
<dbReference type="GO" id="GO:0009986">
    <property type="term" value="C:cell surface"/>
    <property type="evidence" value="ECO:0007669"/>
    <property type="project" value="UniProtKB-SubCell"/>
</dbReference>
<dbReference type="GO" id="GO:0005576">
    <property type="term" value="C:extracellular region"/>
    <property type="evidence" value="ECO:0007669"/>
    <property type="project" value="UniProtKB-SubCell"/>
</dbReference>
<dbReference type="GO" id="GO:0000015">
    <property type="term" value="C:phosphopyruvate hydratase complex"/>
    <property type="evidence" value="ECO:0007669"/>
    <property type="project" value="InterPro"/>
</dbReference>
<dbReference type="GO" id="GO:0000287">
    <property type="term" value="F:magnesium ion binding"/>
    <property type="evidence" value="ECO:0007669"/>
    <property type="project" value="UniProtKB-UniRule"/>
</dbReference>
<dbReference type="GO" id="GO:0004634">
    <property type="term" value="F:phosphopyruvate hydratase activity"/>
    <property type="evidence" value="ECO:0007669"/>
    <property type="project" value="UniProtKB-UniRule"/>
</dbReference>
<dbReference type="GO" id="GO:0006096">
    <property type="term" value="P:glycolytic process"/>
    <property type="evidence" value="ECO:0007669"/>
    <property type="project" value="UniProtKB-UniRule"/>
</dbReference>
<dbReference type="CDD" id="cd03313">
    <property type="entry name" value="enolase"/>
    <property type="match status" value="1"/>
</dbReference>
<dbReference type="FunFam" id="3.20.20.120:FF:000001">
    <property type="entry name" value="Enolase"/>
    <property type="match status" value="1"/>
</dbReference>
<dbReference type="FunFam" id="3.30.390.10:FF:000001">
    <property type="entry name" value="Enolase"/>
    <property type="match status" value="1"/>
</dbReference>
<dbReference type="Gene3D" id="3.20.20.120">
    <property type="entry name" value="Enolase-like C-terminal domain"/>
    <property type="match status" value="1"/>
</dbReference>
<dbReference type="Gene3D" id="3.30.390.10">
    <property type="entry name" value="Enolase-like, N-terminal domain"/>
    <property type="match status" value="1"/>
</dbReference>
<dbReference type="HAMAP" id="MF_00318">
    <property type="entry name" value="Enolase"/>
    <property type="match status" value="1"/>
</dbReference>
<dbReference type="InterPro" id="IPR000941">
    <property type="entry name" value="Enolase"/>
</dbReference>
<dbReference type="InterPro" id="IPR036849">
    <property type="entry name" value="Enolase-like_C_sf"/>
</dbReference>
<dbReference type="InterPro" id="IPR029017">
    <property type="entry name" value="Enolase-like_N"/>
</dbReference>
<dbReference type="InterPro" id="IPR020810">
    <property type="entry name" value="Enolase_C"/>
</dbReference>
<dbReference type="InterPro" id="IPR020809">
    <property type="entry name" value="Enolase_CS"/>
</dbReference>
<dbReference type="InterPro" id="IPR020811">
    <property type="entry name" value="Enolase_N"/>
</dbReference>
<dbReference type="NCBIfam" id="TIGR01060">
    <property type="entry name" value="eno"/>
    <property type="match status" value="1"/>
</dbReference>
<dbReference type="PANTHER" id="PTHR11902">
    <property type="entry name" value="ENOLASE"/>
    <property type="match status" value="1"/>
</dbReference>
<dbReference type="PANTHER" id="PTHR11902:SF1">
    <property type="entry name" value="ENOLASE"/>
    <property type="match status" value="1"/>
</dbReference>
<dbReference type="Pfam" id="PF00113">
    <property type="entry name" value="Enolase_C"/>
    <property type="match status" value="1"/>
</dbReference>
<dbReference type="Pfam" id="PF03952">
    <property type="entry name" value="Enolase_N"/>
    <property type="match status" value="1"/>
</dbReference>
<dbReference type="PIRSF" id="PIRSF001400">
    <property type="entry name" value="Enolase"/>
    <property type="match status" value="1"/>
</dbReference>
<dbReference type="PRINTS" id="PR00148">
    <property type="entry name" value="ENOLASE"/>
</dbReference>
<dbReference type="SFLD" id="SFLDS00001">
    <property type="entry name" value="Enolase"/>
    <property type="match status" value="1"/>
</dbReference>
<dbReference type="SFLD" id="SFLDF00002">
    <property type="entry name" value="enolase"/>
    <property type="match status" value="1"/>
</dbReference>
<dbReference type="SMART" id="SM01192">
    <property type="entry name" value="Enolase_C"/>
    <property type="match status" value="1"/>
</dbReference>
<dbReference type="SMART" id="SM01193">
    <property type="entry name" value="Enolase_N"/>
    <property type="match status" value="1"/>
</dbReference>
<dbReference type="SUPFAM" id="SSF51604">
    <property type="entry name" value="Enolase C-terminal domain-like"/>
    <property type="match status" value="1"/>
</dbReference>
<dbReference type="SUPFAM" id="SSF54826">
    <property type="entry name" value="Enolase N-terminal domain-like"/>
    <property type="match status" value="1"/>
</dbReference>
<dbReference type="PROSITE" id="PS00164">
    <property type="entry name" value="ENOLASE"/>
    <property type="match status" value="1"/>
</dbReference>
<feature type="chain" id="PRO_0000267088" description="Enolase">
    <location>
        <begin position="1"/>
        <end position="425"/>
    </location>
</feature>
<feature type="active site" description="Proton donor" evidence="1">
    <location>
        <position position="205"/>
    </location>
</feature>
<feature type="active site" description="Proton acceptor" evidence="1">
    <location>
        <position position="337"/>
    </location>
</feature>
<feature type="binding site" evidence="1">
    <location>
        <position position="163"/>
    </location>
    <ligand>
        <name>(2R)-2-phosphoglycerate</name>
        <dbReference type="ChEBI" id="CHEBI:58289"/>
    </ligand>
</feature>
<feature type="binding site" evidence="1">
    <location>
        <position position="242"/>
    </location>
    <ligand>
        <name>Mg(2+)</name>
        <dbReference type="ChEBI" id="CHEBI:18420"/>
    </ligand>
</feature>
<feature type="binding site" evidence="1">
    <location>
        <position position="285"/>
    </location>
    <ligand>
        <name>Mg(2+)</name>
        <dbReference type="ChEBI" id="CHEBI:18420"/>
    </ligand>
</feature>
<feature type="binding site" evidence="1">
    <location>
        <position position="312"/>
    </location>
    <ligand>
        <name>Mg(2+)</name>
        <dbReference type="ChEBI" id="CHEBI:18420"/>
    </ligand>
</feature>
<feature type="binding site" evidence="1">
    <location>
        <position position="337"/>
    </location>
    <ligand>
        <name>(2R)-2-phosphoglycerate</name>
        <dbReference type="ChEBI" id="CHEBI:58289"/>
    </ligand>
</feature>
<feature type="binding site" evidence="1">
    <location>
        <position position="366"/>
    </location>
    <ligand>
        <name>(2R)-2-phosphoglycerate</name>
        <dbReference type="ChEBI" id="CHEBI:58289"/>
    </ligand>
</feature>
<feature type="binding site" evidence="1">
    <location>
        <position position="367"/>
    </location>
    <ligand>
        <name>(2R)-2-phosphoglycerate</name>
        <dbReference type="ChEBI" id="CHEBI:58289"/>
    </ligand>
</feature>
<feature type="binding site" evidence="1">
    <location>
        <position position="388"/>
    </location>
    <ligand>
        <name>(2R)-2-phosphoglycerate</name>
        <dbReference type="ChEBI" id="CHEBI:58289"/>
    </ligand>
</feature>
<name>ENO_CERS4</name>
<gene>
    <name evidence="1" type="primary">eno</name>
    <name type="ordered locus">RHOS4_10870</name>
    <name type="ordered locus">RSP_2491</name>
</gene>
<accession>Q3J3H9</accession>
<comment type="function">
    <text evidence="1">Catalyzes the reversible conversion of 2-phosphoglycerate (2-PG) into phosphoenolpyruvate (PEP). It is essential for the degradation of carbohydrates via glycolysis.</text>
</comment>
<comment type="catalytic activity">
    <reaction evidence="1">
        <text>(2R)-2-phosphoglycerate = phosphoenolpyruvate + H2O</text>
        <dbReference type="Rhea" id="RHEA:10164"/>
        <dbReference type="ChEBI" id="CHEBI:15377"/>
        <dbReference type="ChEBI" id="CHEBI:58289"/>
        <dbReference type="ChEBI" id="CHEBI:58702"/>
        <dbReference type="EC" id="4.2.1.11"/>
    </reaction>
</comment>
<comment type="cofactor">
    <cofactor evidence="1">
        <name>Mg(2+)</name>
        <dbReference type="ChEBI" id="CHEBI:18420"/>
    </cofactor>
    <text evidence="1">Binds a second Mg(2+) ion via substrate during catalysis.</text>
</comment>
<comment type="pathway">
    <text evidence="1">Carbohydrate degradation; glycolysis; pyruvate from D-glyceraldehyde 3-phosphate: step 4/5.</text>
</comment>
<comment type="subcellular location">
    <subcellularLocation>
        <location evidence="1">Cytoplasm</location>
    </subcellularLocation>
    <subcellularLocation>
        <location evidence="1">Secreted</location>
    </subcellularLocation>
    <subcellularLocation>
        <location evidence="1">Cell surface</location>
    </subcellularLocation>
    <text evidence="1">Fractions of enolase are present in both the cytoplasm and on the cell surface.</text>
</comment>
<comment type="similarity">
    <text evidence="1">Belongs to the enolase family.</text>
</comment>